<protein>
    <recommendedName>
        <fullName evidence="1">Bifunctional glutamine synthetase adenylyltransferase/adenylyl-removing enzyme</fullName>
    </recommendedName>
    <alternativeName>
        <fullName evidence="1">ATP:glutamine synthetase adenylyltransferase</fullName>
    </alternativeName>
    <alternativeName>
        <fullName evidence="1">ATase</fullName>
    </alternativeName>
    <domain>
        <recommendedName>
            <fullName evidence="1">Glutamine synthetase adenylyl-L-tyrosine phosphorylase</fullName>
            <ecNumber evidence="1">2.7.7.89</ecNumber>
        </recommendedName>
        <alternativeName>
            <fullName evidence="1">Adenylyl removase</fullName>
            <shortName evidence="1">AR</shortName>
            <shortName evidence="1">AT-N</shortName>
        </alternativeName>
    </domain>
    <domain>
        <recommendedName>
            <fullName evidence="1">Glutamine synthetase adenylyl transferase</fullName>
            <ecNumber evidence="1">2.7.7.42</ecNumber>
        </recommendedName>
        <alternativeName>
            <fullName evidence="1">Adenylyl transferase</fullName>
            <shortName evidence="1">AT</shortName>
            <shortName evidence="1">AT-C</shortName>
        </alternativeName>
    </domain>
</protein>
<accession>Q8YG35</accession>
<keyword id="KW-0067">ATP-binding</keyword>
<keyword id="KW-0460">Magnesium</keyword>
<keyword id="KW-0511">Multifunctional enzyme</keyword>
<keyword id="KW-0547">Nucleotide-binding</keyword>
<keyword id="KW-0548">Nucleotidyltransferase</keyword>
<keyword id="KW-0808">Transferase</keyword>
<name>GLNE_BRUME</name>
<proteinExistence type="inferred from homology"/>
<dbReference type="EC" id="2.7.7.89" evidence="1"/>
<dbReference type="EC" id="2.7.7.42" evidence="1"/>
<dbReference type="EMBL" id="AE008917">
    <property type="protein sequence ID" value="AAL52508.1"/>
    <property type="status" value="ALT_INIT"/>
    <property type="molecule type" value="Genomic_DNA"/>
</dbReference>
<dbReference type="PIR" id="AI3417">
    <property type="entry name" value="AI3417"/>
</dbReference>
<dbReference type="RefSeq" id="WP_004683327.1">
    <property type="nucleotide sequence ID" value="NC_003317.1"/>
</dbReference>
<dbReference type="SMR" id="Q8YG35"/>
<dbReference type="GeneID" id="29594178"/>
<dbReference type="KEGG" id="bme:BMEI1327"/>
<dbReference type="KEGG" id="bmel:DK63_76"/>
<dbReference type="PATRIC" id="fig|224914.52.peg.79"/>
<dbReference type="eggNOG" id="COG1391">
    <property type="taxonomic scope" value="Bacteria"/>
</dbReference>
<dbReference type="PhylomeDB" id="Q8YG35"/>
<dbReference type="Proteomes" id="UP000000419">
    <property type="component" value="Chromosome I"/>
</dbReference>
<dbReference type="GO" id="GO:0005829">
    <property type="term" value="C:cytosol"/>
    <property type="evidence" value="ECO:0007669"/>
    <property type="project" value="TreeGrafter"/>
</dbReference>
<dbReference type="GO" id="GO:0008882">
    <property type="term" value="F:[glutamate-ammonia-ligase] adenylyltransferase activity"/>
    <property type="evidence" value="ECO:0007669"/>
    <property type="project" value="UniProtKB-UniRule"/>
</dbReference>
<dbReference type="GO" id="GO:0047388">
    <property type="term" value="F:[glutamine synthetase]-adenylyl-L-tyrosine phosphorylase activity"/>
    <property type="evidence" value="ECO:0007669"/>
    <property type="project" value="UniProtKB-EC"/>
</dbReference>
<dbReference type="GO" id="GO:0005524">
    <property type="term" value="F:ATP binding"/>
    <property type="evidence" value="ECO:0007669"/>
    <property type="project" value="UniProtKB-UniRule"/>
</dbReference>
<dbReference type="GO" id="GO:0000287">
    <property type="term" value="F:magnesium ion binding"/>
    <property type="evidence" value="ECO:0007669"/>
    <property type="project" value="UniProtKB-UniRule"/>
</dbReference>
<dbReference type="GO" id="GO:0000820">
    <property type="term" value="P:regulation of glutamine family amino acid metabolic process"/>
    <property type="evidence" value="ECO:0007669"/>
    <property type="project" value="UniProtKB-UniRule"/>
</dbReference>
<dbReference type="CDD" id="cd05401">
    <property type="entry name" value="NT_GlnE_GlnD_like"/>
    <property type="match status" value="2"/>
</dbReference>
<dbReference type="Gene3D" id="1.20.120.1510">
    <property type="match status" value="1"/>
</dbReference>
<dbReference type="Gene3D" id="3.30.460.10">
    <property type="entry name" value="Beta Polymerase, domain 2"/>
    <property type="match status" value="2"/>
</dbReference>
<dbReference type="Gene3D" id="1.20.120.330">
    <property type="entry name" value="Nucleotidyltransferases domain 2"/>
    <property type="match status" value="2"/>
</dbReference>
<dbReference type="HAMAP" id="MF_00802">
    <property type="entry name" value="GlnE"/>
    <property type="match status" value="1"/>
</dbReference>
<dbReference type="InterPro" id="IPR023057">
    <property type="entry name" value="GlnE"/>
</dbReference>
<dbReference type="InterPro" id="IPR005190">
    <property type="entry name" value="GlnE_rpt_dom"/>
</dbReference>
<dbReference type="InterPro" id="IPR043519">
    <property type="entry name" value="NT_sf"/>
</dbReference>
<dbReference type="InterPro" id="IPR013546">
    <property type="entry name" value="PII_UdlTrfase/GS_AdlTrfase"/>
</dbReference>
<dbReference type="NCBIfam" id="NF008292">
    <property type="entry name" value="PRK11072.1"/>
    <property type="match status" value="1"/>
</dbReference>
<dbReference type="NCBIfam" id="NF010706">
    <property type="entry name" value="PRK14108.1"/>
    <property type="match status" value="1"/>
</dbReference>
<dbReference type="PANTHER" id="PTHR30621:SF0">
    <property type="entry name" value="BIFUNCTIONAL GLUTAMINE SYNTHETASE ADENYLYLTRANSFERASE_ADENYLYL-REMOVING ENZYME"/>
    <property type="match status" value="1"/>
</dbReference>
<dbReference type="PANTHER" id="PTHR30621">
    <property type="entry name" value="GLUTAMINE SYNTHETASE ADENYLYLTRANSFERASE"/>
    <property type="match status" value="1"/>
</dbReference>
<dbReference type="Pfam" id="PF08335">
    <property type="entry name" value="GlnD_UR_UTase"/>
    <property type="match status" value="1"/>
</dbReference>
<dbReference type="Pfam" id="PF03710">
    <property type="entry name" value="GlnE"/>
    <property type="match status" value="2"/>
</dbReference>
<dbReference type="SUPFAM" id="SSF81301">
    <property type="entry name" value="Nucleotidyltransferase"/>
    <property type="match status" value="2"/>
</dbReference>
<dbReference type="SUPFAM" id="SSF81593">
    <property type="entry name" value="Nucleotidyltransferase substrate binding subunit/domain"/>
    <property type="match status" value="2"/>
</dbReference>
<evidence type="ECO:0000255" key="1">
    <source>
        <dbReference type="HAMAP-Rule" id="MF_00802"/>
    </source>
</evidence>
<evidence type="ECO:0000305" key="2"/>
<comment type="function">
    <text evidence="1">Involved in the regulation of glutamine synthetase GlnA, a key enzyme in the process to assimilate ammonia. When cellular nitrogen levels are high, the C-terminal adenylyl transferase (AT) inactivates GlnA by covalent transfer of an adenylyl group from ATP to specific tyrosine residue of GlnA, thus reducing its activity. Conversely, when nitrogen levels are low, the N-terminal adenylyl removase (AR) activates GlnA by removing the adenylyl group by phosphorolysis, increasing its activity. The regulatory region of GlnE binds the signal transduction protein PII (GlnB) which indicates the nitrogen status of the cell.</text>
</comment>
<comment type="catalytic activity">
    <reaction evidence="1">
        <text>[glutamine synthetase]-O(4)-(5'-adenylyl)-L-tyrosine + phosphate = [glutamine synthetase]-L-tyrosine + ADP</text>
        <dbReference type="Rhea" id="RHEA:43716"/>
        <dbReference type="Rhea" id="RHEA-COMP:10660"/>
        <dbReference type="Rhea" id="RHEA-COMP:10661"/>
        <dbReference type="ChEBI" id="CHEBI:43474"/>
        <dbReference type="ChEBI" id="CHEBI:46858"/>
        <dbReference type="ChEBI" id="CHEBI:83624"/>
        <dbReference type="ChEBI" id="CHEBI:456216"/>
        <dbReference type="EC" id="2.7.7.89"/>
    </reaction>
</comment>
<comment type="catalytic activity">
    <reaction evidence="1">
        <text>[glutamine synthetase]-L-tyrosine + ATP = [glutamine synthetase]-O(4)-(5'-adenylyl)-L-tyrosine + diphosphate</text>
        <dbReference type="Rhea" id="RHEA:18589"/>
        <dbReference type="Rhea" id="RHEA-COMP:10660"/>
        <dbReference type="Rhea" id="RHEA-COMP:10661"/>
        <dbReference type="ChEBI" id="CHEBI:30616"/>
        <dbReference type="ChEBI" id="CHEBI:33019"/>
        <dbReference type="ChEBI" id="CHEBI:46858"/>
        <dbReference type="ChEBI" id="CHEBI:83624"/>
        <dbReference type="EC" id="2.7.7.42"/>
    </reaction>
</comment>
<comment type="cofactor">
    <cofactor evidence="1">
        <name>Mg(2+)</name>
        <dbReference type="ChEBI" id="CHEBI:18420"/>
    </cofactor>
</comment>
<comment type="similarity">
    <text evidence="1">Belongs to the GlnE family.</text>
</comment>
<comment type="sequence caution" evidence="2">
    <conflict type="erroneous initiation">
        <sequence resource="EMBL-CDS" id="AAL52508"/>
    </conflict>
</comment>
<sequence length="983" mass="109444">MTVENAKALFFERNLCALTPLDPERASAFLADLEARAREEELAGVVALLGRKKAADFLSAILDLSPFIREALTRQPRILDRIVSATPESALEAILDEISASGTVAGVSESELMTSLRQLKREAHVLIALCDLARIFNTETTTDRLTDLAEACTGAAVRFLLLDADAAGRINLPDRSNPEKDCGWIVLGMGKFGARELNYSSDIDLIVFIDETKPAIGDPYECVDTFSRLTRRLVRILQDRTGDGYVFRVDLRLRPDPGSTPLAIPVGAALHYYEGRGQNWERAAMIKARPVAGDRLSGKQILAELSPYVWRKYLDYAAIADVHSIKRQIHAHKGHGDIAVRGHNVKLGRGGIREIEFFVQTQQLIAGGRFPELRGNQTVPMLARLAERGWITQQARDALAQEYWFLRDVEHRIQMIADEQTHILPEDDEGFARVSHMMGYADPAEFSEIFLAALKVVEKQYAALFEQAPELGAASGNLVFTGDVDDPGTLETLSAMGYERSSDICRVIRTWHFGRYRATQSAEARERLTELTPALLKAFAETRRADESLLRFDGFLQGLPAGIQLFSLLQSNPRLLNLLVMIMSAAPRLADIITRNPHVFDGLLDPAIFSEVPTRAYLEERLRAFLGSATDFEEVLDRLRIFAAEHRFLIGIRLLTGAINGVRAGQAFSDLAELMVGRALEAVEAELQRRHGKVKGAKVALLAMGKLGSRELTAGSDVDLILLYDHDKDAEESDGEKPLAPSKYYIRLTQRLIAALSAPTAEGVLYEVDMRLRPSGNKGPVATHIEAFGKYQRNDAWTWEHMALTRARPIHGDEAFIARIKVDIEDVLAMPRDVRKLAGDVREMRELIAQEKPPRDDWDLKLKPGGIIDLEFIAQFATLAGYVKKTPRPFATEEVLANLDPFFADPAMVDGLVEAHRFYTNLSQAIRLCLNDSAGLDQFPPGMRELLCRVAGLPDIERIEYELLEHYRLVRAAFDKLVGHGAD</sequence>
<gene>
    <name evidence="1" type="primary">glnE</name>
    <name type="ordered locus">BMEI1327</name>
</gene>
<organism>
    <name type="scientific">Brucella melitensis biotype 1 (strain ATCC 23456 / CCUG 17765 / NCTC 10094 / 16M)</name>
    <dbReference type="NCBI Taxonomy" id="224914"/>
    <lineage>
        <taxon>Bacteria</taxon>
        <taxon>Pseudomonadati</taxon>
        <taxon>Pseudomonadota</taxon>
        <taxon>Alphaproteobacteria</taxon>
        <taxon>Hyphomicrobiales</taxon>
        <taxon>Brucellaceae</taxon>
        <taxon>Brucella/Ochrobactrum group</taxon>
        <taxon>Brucella</taxon>
    </lineage>
</organism>
<feature type="chain" id="PRO_0000209235" description="Bifunctional glutamine synthetase adenylyltransferase/adenylyl-removing enzyme">
    <location>
        <begin position="1"/>
        <end position="983"/>
    </location>
</feature>
<feature type="region of interest" description="Adenylyl removase" evidence="1">
    <location>
        <begin position="1"/>
        <end position="468"/>
    </location>
</feature>
<feature type="region of interest" description="Adenylyl transferase" evidence="1">
    <location>
        <begin position="473"/>
        <end position="983"/>
    </location>
</feature>
<reference key="1">
    <citation type="journal article" date="2002" name="Proc. Natl. Acad. Sci. U.S.A.">
        <title>The genome sequence of the facultative intracellular pathogen Brucella melitensis.</title>
        <authorList>
            <person name="DelVecchio V.G."/>
            <person name="Kapatral V."/>
            <person name="Redkar R.J."/>
            <person name="Patra G."/>
            <person name="Mujer C."/>
            <person name="Los T."/>
            <person name="Ivanova N."/>
            <person name="Anderson I."/>
            <person name="Bhattacharyya A."/>
            <person name="Lykidis A."/>
            <person name="Reznik G."/>
            <person name="Jablonski L."/>
            <person name="Larsen N."/>
            <person name="D'Souza M."/>
            <person name="Bernal A."/>
            <person name="Mazur M."/>
            <person name="Goltsman E."/>
            <person name="Selkov E."/>
            <person name="Elzer P.H."/>
            <person name="Hagius S."/>
            <person name="O'Callaghan D."/>
            <person name="Letesson J.-J."/>
            <person name="Haselkorn R."/>
            <person name="Kyrpides N.C."/>
            <person name="Overbeek R."/>
        </authorList>
    </citation>
    <scope>NUCLEOTIDE SEQUENCE [LARGE SCALE GENOMIC DNA]</scope>
    <source>
        <strain>ATCC 23456 / CCUG 17765 / NCTC 10094 / 16M</strain>
    </source>
</reference>